<gene>
    <name evidence="1" type="primary">glpK</name>
    <name type="ordered locus">BPP3969</name>
</gene>
<dbReference type="EC" id="2.7.1.30" evidence="1"/>
<dbReference type="EMBL" id="BX640435">
    <property type="protein sequence ID" value="CAE39252.1"/>
    <property type="molecule type" value="Genomic_DNA"/>
</dbReference>
<dbReference type="RefSeq" id="WP_003815059.1">
    <property type="nucleotide sequence ID" value="NC_002928.3"/>
</dbReference>
<dbReference type="SMR" id="Q7W3R1"/>
<dbReference type="GeneID" id="93205768"/>
<dbReference type="KEGG" id="bpa:BPP3969"/>
<dbReference type="HOGENOM" id="CLU_009281_2_3_4"/>
<dbReference type="UniPathway" id="UPA00618">
    <property type="reaction ID" value="UER00672"/>
</dbReference>
<dbReference type="Proteomes" id="UP000001421">
    <property type="component" value="Chromosome"/>
</dbReference>
<dbReference type="GO" id="GO:0005829">
    <property type="term" value="C:cytosol"/>
    <property type="evidence" value="ECO:0007669"/>
    <property type="project" value="TreeGrafter"/>
</dbReference>
<dbReference type="GO" id="GO:0005524">
    <property type="term" value="F:ATP binding"/>
    <property type="evidence" value="ECO:0007669"/>
    <property type="project" value="UniProtKB-UniRule"/>
</dbReference>
<dbReference type="GO" id="GO:0004370">
    <property type="term" value="F:glycerol kinase activity"/>
    <property type="evidence" value="ECO:0000250"/>
    <property type="project" value="UniProtKB"/>
</dbReference>
<dbReference type="GO" id="GO:0019563">
    <property type="term" value="P:glycerol catabolic process"/>
    <property type="evidence" value="ECO:0007669"/>
    <property type="project" value="UniProtKB-UniRule"/>
</dbReference>
<dbReference type="GO" id="GO:0006071">
    <property type="term" value="P:glycerol metabolic process"/>
    <property type="evidence" value="ECO:0000250"/>
    <property type="project" value="UniProtKB"/>
</dbReference>
<dbReference type="GO" id="GO:0006072">
    <property type="term" value="P:glycerol-3-phosphate metabolic process"/>
    <property type="evidence" value="ECO:0007669"/>
    <property type="project" value="InterPro"/>
</dbReference>
<dbReference type="CDD" id="cd07786">
    <property type="entry name" value="FGGY_EcGK_like"/>
    <property type="match status" value="1"/>
</dbReference>
<dbReference type="FunFam" id="3.30.420.40:FF:000007">
    <property type="entry name" value="Glycerol kinase"/>
    <property type="match status" value="1"/>
</dbReference>
<dbReference type="FunFam" id="3.30.420.40:FF:000008">
    <property type="entry name" value="Glycerol kinase"/>
    <property type="match status" value="1"/>
</dbReference>
<dbReference type="Gene3D" id="3.30.420.40">
    <property type="match status" value="2"/>
</dbReference>
<dbReference type="HAMAP" id="MF_00186">
    <property type="entry name" value="Glycerol_kin"/>
    <property type="match status" value="1"/>
</dbReference>
<dbReference type="InterPro" id="IPR043129">
    <property type="entry name" value="ATPase_NBD"/>
</dbReference>
<dbReference type="InterPro" id="IPR000577">
    <property type="entry name" value="Carb_kinase_FGGY"/>
</dbReference>
<dbReference type="InterPro" id="IPR018483">
    <property type="entry name" value="Carb_kinase_FGGY_CS"/>
</dbReference>
<dbReference type="InterPro" id="IPR018485">
    <property type="entry name" value="FGGY_C"/>
</dbReference>
<dbReference type="InterPro" id="IPR018484">
    <property type="entry name" value="FGGY_N"/>
</dbReference>
<dbReference type="InterPro" id="IPR005999">
    <property type="entry name" value="Glycerol_kin"/>
</dbReference>
<dbReference type="NCBIfam" id="TIGR01311">
    <property type="entry name" value="glycerol_kin"/>
    <property type="match status" value="1"/>
</dbReference>
<dbReference type="NCBIfam" id="NF000756">
    <property type="entry name" value="PRK00047.1"/>
    <property type="match status" value="1"/>
</dbReference>
<dbReference type="PANTHER" id="PTHR10196:SF69">
    <property type="entry name" value="GLYCEROL KINASE"/>
    <property type="match status" value="1"/>
</dbReference>
<dbReference type="PANTHER" id="PTHR10196">
    <property type="entry name" value="SUGAR KINASE"/>
    <property type="match status" value="1"/>
</dbReference>
<dbReference type="Pfam" id="PF02782">
    <property type="entry name" value="FGGY_C"/>
    <property type="match status" value="1"/>
</dbReference>
<dbReference type="Pfam" id="PF00370">
    <property type="entry name" value="FGGY_N"/>
    <property type="match status" value="1"/>
</dbReference>
<dbReference type="PIRSF" id="PIRSF000538">
    <property type="entry name" value="GlpK"/>
    <property type="match status" value="1"/>
</dbReference>
<dbReference type="SUPFAM" id="SSF53067">
    <property type="entry name" value="Actin-like ATPase domain"/>
    <property type="match status" value="2"/>
</dbReference>
<dbReference type="PROSITE" id="PS00933">
    <property type="entry name" value="FGGY_KINASES_1"/>
    <property type="match status" value="1"/>
</dbReference>
<dbReference type="PROSITE" id="PS00445">
    <property type="entry name" value="FGGY_KINASES_2"/>
    <property type="match status" value="1"/>
</dbReference>
<accession>Q7W3R1</accession>
<name>GLPK_BORPA</name>
<keyword id="KW-0067">ATP-binding</keyword>
<keyword id="KW-0319">Glycerol metabolism</keyword>
<keyword id="KW-0418">Kinase</keyword>
<keyword id="KW-0547">Nucleotide-binding</keyword>
<keyword id="KW-0808">Transferase</keyword>
<proteinExistence type="inferred from homology"/>
<comment type="function">
    <text evidence="1">Key enzyme in the regulation of glycerol uptake and metabolism. Catalyzes the phosphorylation of glycerol to yield sn-glycerol 3-phosphate.</text>
</comment>
<comment type="catalytic activity">
    <reaction evidence="1">
        <text>glycerol + ATP = sn-glycerol 3-phosphate + ADP + H(+)</text>
        <dbReference type="Rhea" id="RHEA:21644"/>
        <dbReference type="ChEBI" id="CHEBI:15378"/>
        <dbReference type="ChEBI" id="CHEBI:17754"/>
        <dbReference type="ChEBI" id="CHEBI:30616"/>
        <dbReference type="ChEBI" id="CHEBI:57597"/>
        <dbReference type="ChEBI" id="CHEBI:456216"/>
        <dbReference type="EC" id="2.7.1.30"/>
    </reaction>
</comment>
<comment type="activity regulation">
    <text evidence="1">Inhibited by fructose 1,6-bisphosphate (FBP).</text>
</comment>
<comment type="pathway">
    <text evidence="1">Polyol metabolism; glycerol degradation via glycerol kinase pathway; sn-glycerol 3-phosphate from glycerol: step 1/1.</text>
</comment>
<comment type="similarity">
    <text evidence="1">Belongs to the FGGY kinase family.</text>
</comment>
<reference key="1">
    <citation type="journal article" date="2003" name="Nat. Genet.">
        <title>Comparative analysis of the genome sequences of Bordetella pertussis, Bordetella parapertussis and Bordetella bronchiseptica.</title>
        <authorList>
            <person name="Parkhill J."/>
            <person name="Sebaihia M."/>
            <person name="Preston A."/>
            <person name="Murphy L.D."/>
            <person name="Thomson N.R."/>
            <person name="Harris D.E."/>
            <person name="Holden M.T.G."/>
            <person name="Churcher C.M."/>
            <person name="Bentley S.D."/>
            <person name="Mungall K.L."/>
            <person name="Cerdeno-Tarraga A.-M."/>
            <person name="Temple L."/>
            <person name="James K.D."/>
            <person name="Harris B."/>
            <person name="Quail M.A."/>
            <person name="Achtman M."/>
            <person name="Atkin R."/>
            <person name="Baker S."/>
            <person name="Basham D."/>
            <person name="Bason N."/>
            <person name="Cherevach I."/>
            <person name="Chillingworth T."/>
            <person name="Collins M."/>
            <person name="Cronin A."/>
            <person name="Davis P."/>
            <person name="Doggett J."/>
            <person name="Feltwell T."/>
            <person name="Goble A."/>
            <person name="Hamlin N."/>
            <person name="Hauser H."/>
            <person name="Holroyd S."/>
            <person name="Jagels K."/>
            <person name="Leather S."/>
            <person name="Moule S."/>
            <person name="Norberczak H."/>
            <person name="O'Neil S."/>
            <person name="Ormond D."/>
            <person name="Price C."/>
            <person name="Rabbinowitsch E."/>
            <person name="Rutter S."/>
            <person name="Sanders M."/>
            <person name="Saunders D."/>
            <person name="Seeger K."/>
            <person name="Sharp S."/>
            <person name="Simmonds M."/>
            <person name="Skelton J."/>
            <person name="Squares R."/>
            <person name="Squares S."/>
            <person name="Stevens K."/>
            <person name="Unwin L."/>
            <person name="Whitehead S."/>
            <person name="Barrell B.G."/>
            <person name="Maskell D.J."/>
        </authorList>
    </citation>
    <scope>NUCLEOTIDE SEQUENCE [LARGE SCALE GENOMIC DNA]</scope>
    <source>
        <strain>12822 / ATCC BAA-587 / NCTC 13253</strain>
    </source>
</reference>
<organism>
    <name type="scientific">Bordetella parapertussis (strain 12822 / ATCC BAA-587 / NCTC 13253)</name>
    <dbReference type="NCBI Taxonomy" id="257311"/>
    <lineage>
        <taxon>Bacteria</taxon>
        <taxon>Pseudomonadati</taxon>
        <taxon>Pseudomonadota</taxon>
        <taxon>Betaproteobacteria</taxon>
        <taxon>Burkholderiales</taxon>
        <taxon>Alcaligenaceae</taxon>
        <taxon>Bordetella</taxon>
    </lineage>
</organism>
<evidence type="ECO:0000255" key="1">
    <source>
        <dbReference type="HAMAP-Rule" id="MF_00186"/>
    </source>
</evidence>
<sequence>MTANEFILALDQGTTSSRAIVFDRAGTVRGMGQREFRQHYPRPGWVEHDAGEIWQSQLEVAREALRNAGASAADLAALGITNQRETTLIWERATGRPLARAIVWQDRRTAAMCEKLLHDGHGRMLQERTGLVVDAYFSGTKLAWLLDHVPGARKMAERGELAFGTVDTWLVWQLTGGAVHSTDPSNASRTMLFDLHAQDWSDDILALLNIPRGILPRIAPSSARIGETLPEWLGGSIPIAGVAGDQQAATFGQACFTPGMAKNTYGTGCFMLMNVGDAPVASRHNLLSTVGWSLPAGNATHATYMVEGGVFMAGAAVQWLRDGLGIIQRSADIEALAASVADTDDVFMVPAFAGLGAPHWDPYARGTLVGMTRGTTRAHIARATLESIALQSAELLSCMNADSGIPLSELRVDGGAARNDLLMQMQADLLGVPVVRPRVPESTALGAAGLAGLAVGFWSSLDEFGAQWQAERTFEPAWPADVREARMQRWRQAVELSKGWSRPAAGHA</sequence>
<protein>
    <recommendedName>
        <fullName evidence="1">Glycerol kinase</fullName>
        <ecNumber evidence="1">2.7.1.30</ecNumber>
    </recommendedName>
    <alternativeName>
        <fullName evidence="1">ATP:glycerol 3-phosphotransferase</fullName>
    </alternativeName>
    <alternativeName>
        <fullName evidence="1">Glycerokinase</fullName>
        <shortName evidence="1">GK</shortName>
    </alternativeName>
</protein>
<feature type="chain" id="PRO_0000059437" description="Glycerol kinase">
    <location>
        <begin position="1"/>
        <end position="508"/>
    </location>
</feature>
<feature type="binding site" evidence="1">
    <location>
        <position position="14"/>
    </location>
    <ligand>
        <name>ADP</name>
        <dbReference type="ChEBI" id="CHEBI:456216"/>
    </ligand>
</feature>
<feature type="binding site" evidence="1">
    <location>
        <position position="14"/>
    </location>
    <ligand>
        <name>ATP</name>
        <dbReference type="ChEBI" id="CHEBI:30616"/>
    </ligand>
</feature>
<feature type="binding site" evidence="1">
    <location>
        <position position="14"/>
    </location>
    <ligand>
        <name>sn-glycerol 3-phosphate</name>
        <dbReference type="ChEBI" id="CHEBI:57597"/>
    </ligand>
</feature>
<feature type="binding site" evidence="1">
    <location>
        <position position="15"/>
    </location>
    <ligand>
        <name>ATP</name>
        <dbReference type="ChEBI" id="CHEBI:30616"/>
    </ligand>
</feature>
<feature type="binding site" evidence="1">
    <location>
        <position position="16"/>
    </location>
    <ligand>
        <name>ATP</name>
        <dbReference type="ChEBI" id="CHEBI:30616"/>
    </ligand>
</feature>
<feature type="binding site" evidence="1">
    <location>
        <position position="18"/>
    </location>
    <ligand>
        <name>ADP</name>
        <dbReference type="ChEBI" id="CHEBI:456216"/>
    </ligand>
</feature>
<feature type="binding site" evidence="1">
    <location>
        <position position="84"/>
    </location>
    <ligand>
        <name>glycerol</name>
        <dbReference type="ChEBI" id="CHEBI:17754"/>
    </ligand>
</feature>
<feature type="binding site" evidence="1">
    <location>
        <position position="84"/>
    </location>
    <ligand>
        <name>sn-glycerol 3-phosphate</name>
        <dbReference type="ChEBI" id="CHEBI:57597"/>
    </ligand>
</feature>
<feature type="binding site" evidence="1">
    <location>
        <position position="85"/>
    </location>
    <ligand>
        <name>glycerol</name>
        <dbReference type="ChEBI" id="CHEBI:17754"/>
    </ligand>
</feature>
<feature type="binding site" evidence="1">
    <location>
        <position position="85"/>
    </location>
    <ligand>
        <name>sn-glycerol 3-phosphate</name>
        <dbReference type="ChEBI" id="CHEBI:57597"/>
    </ligand>
</feature>
<feature type="binding site" evidence="1">
    <location>
        <position position="136"/>
    </location>
    <ligand>
        <name>glycerol</name>
        <dbReference type="ChEBI" id="CHEBI:17754"/>
    </ligand>
</feature>
<feature type="binding site" evidence="1">
    <location>
        <position position="136"/>
    </location>
    <ligand>
        <name>sn-glycerol 3-phosphate</name>
        <dbReference type="ChEBI" id="CHEBI:57597"/>
    </ligand>
</feature>
<feature type="binding site" evidence="1">
    <location>
        <position position="245"/>
    </location>
    <ligand>
        <name>glycerol</name>
        <dbReference type="ChEBI" id="CHEBI:17754"/>
    </ligand>
</feature>
<feature type="binding site" evidence="1">
    <location>
        <position position="245"/>
    </location>
    <ligand>
        <name>sn-glycerol 3-phosphate</name>
        <dbReference type="ChEBI" id="CHEBI:57597"/>
    </ligand>
</feature>
<feature type="binding site" evidence="1">
    <location>
        <position position="246"/>
    </location>
    <ligand>
        <name>glycerol</name>
        <dbReference type="ChEBI" id="CHEBI:17754"/>
    </ligand>
</feature>
<feature type="binding site" evidence="1">
    <location>
        <position position="267"/>
    </location>
    <ligand>
        <name>ADP</name>
        <dbReference type="ChEBI" id="CHEBI:456216"/>
    </ligand>
</feature>
<feature type="binding site" evidence="1">
    <location>
        <position position="267"/>
    </location>
    <ligand>
        <name>ATP</name>
        <dbReference type="ChEBI" id="CHEBI:30616"/>
    </ligand>
</feature>
<feature type="binding site" evidence="1">
    <location>
        <position position="314"/>
    </location>
    <ligand>
        <name>ADP</name>
        <dbReference type="ChEBI" id="CHEBI:456216"/>
    </ligand>
</feature>
<feature type="binding site" evidence="1">
    <location>
        <position position="314"/>
    </location>
    <ligand>
        <name>ATP</name>
        <dbReference type="ChEBI" id="CHEBI:30616"/>
    </ligand>
</feature>
<feature type="binding site" evidence="1">
    <location>
        <position position="318"/>
    </location>
    <ligand>
        <name>ATP</name>
        <dbReference type="ChEBI" id="CHEBI:30616"/>
    </ligand>
</feature>
<feature type="binding site" evidence="1">
    <location>
        <position position="415"/>
    </location>
    <ligand>
        <name>ADP</name>
        <dbReference type="ChEBI" id="CHEBI:456216"/>
    </ligand>
</feature>
<feature type="binding site" evidence="1">
    <location>
        <position position="415"/>
    </location>
    <ligand>
        <name>ATP</name>
        <dbReference type="ChEBI" id="CHEBI:30616"/>
    </ligand>
</feature>
<feature type="binding site" evidence="1">
    <location>
        <position position="419"/>
    </location>
    <ligand>
        <name>ADP</name>
        <dbReference type="ChEBI" id="CHEBI:456216"/>
    </ligand>
</feature>